<protein>
    <recommendedName>
        <fullName evidence="6">Ribosyldihydronicotinamide dehydrogenase-like protein traD</fullName>
        <ecNumber evidence="8">1.10.-.-</ecNumber>
    </recommendedName>
    <alternativeName>
        <fullName evidence="6">Terrestric acid biosynthesis cluster protein D</fullName>
    </alternativeName>
</protein>
<gene>
    <name evidence="6" type="primary">traD</name>
</gene>
<evidence type="ECO:0000250" key="1">
    <source>
        <dbReference type="UniProtKB" id="A0A0E0RXA7"/>
    </source>
</evidence>
<evidence type="ECO:0000250" key="2">
    <source>
        <dbReference type="UniProtKB" id="A0A161CKG1"/>
    </source>
</evidence>
<evidence type="ECO:0000250" key="3">
    <source>
        <dbReference type="UniProtKB" id="P15559"/>
    </source>
</evidence>
<evidence type="ECO:0000269" key="4">
    <source>
    </source>
</evidence>
<evidence type="ECO:0000269" key="5">
    <source>
    </source>
</evidence>
<evidence type="ECO:0000303" key="6">
    <source>
    </source>
</evidence>
<evidence type="ECO:0000305" key="7"/>
<evidence type="ECO:0000305" key="8">
    <source>
    </source>
</evidence>
<comment type="function">
    <text evidence="1 2 4 5">Ribosyldihydronicotinamide dehydrogenase-like protein; part of the tra gene cluster that produces terrestric acid (PubMed:30811183). The clavatol biosynthesis cluster cla and the terrestric acid cluster tra are both involved in the production of peniphenones and penilactones (PubMed:30811183). The non-reducing PKS claF is responsible for the formation of clavatol from successive condensations of 3 malonyl-CoA units, presumably with a simple acetyl-CoA starter unit, and 2 methylation steps (PubMed:30811183). The esterase claE probably collaborates with claF by catalyzing the hydrolysis of ACP-bound acyl intermediates to free the ACP from stalled intermediates (By similarity). The clavatol oxidase claD then converts clavatol to hydroxyclavatol (PubMed:30811183). Spontaneous dehydration of hydroxyclavatol leads to the accumulation of the highly active ortho-quinone methide (PubMed:30811183, PubMed:31860310). On the other hand, the PKS-NRPS hybrid traA is involved in the formation of crustosic acid, with the help of traB and traD (PubMed:30811183). The polyketide synthase module (PKS) of traA is responsible for the synthesis of the polyketide backbone via the condensation of an acetyl-CoA starter unit with 3 malonyl-CoA units (PubMed:30811183). The downstream nonribosomal peptide synthetase (NRPS) module then amidates the carboxyl end of the polyketide with L-malic acid (PubMed:30811183). Because traA lacks a designated enoylreductase (ER) domain, the required activity is provided the enoyl reductase traG (By similarity). Crustosic acid undergoes decarboxylation and isomerization to the terrestric acid, catalyzed by the 2-oxoglutarate-dependent dioxygenase traH (PubMed:30811183). Both acids are further converted to the 2 gamma-butyrolactones (R)-5-methyltetronic acid and (S)-5-carboxylmethyltetronic acid, with involvement of the cytochrome P450 monooxygenase claJ (PubMed:30811183). Spontaneous addition of the methide to these gamma-butyrolactones leads to peniphenone D and penilactone D, which undergo again stereospecific attacking by methide to give penilactones A and B (PubMed:30811183, PubMed:31860310).</text>
</comment>
<comment type="cofactor">
    <cofactor evidence="3">
        <name>FAD</name>
        <dbReference type="ChEBI" id="CHEBI:57692"/>
    </cofactor>
</comment>
<comment type="pathway">
    <text evidence="4">Secondary metabolite biosynthesis.</text>
</comment>
<comment type="subunit">
    <text evidence="3">Homodimer.</text>
</comment>
<comment type="disruption phenotype">
    <text evidence="4">Completely abolishes the production of peniphenone D, penilactone D, penilactone A and penilactone B, as well as of crustosic acid and terrestric acid.</text>
</comment>
<comment type="similarity">
    <text evidence="7">Belongs to the NAD(P)H dehydrogenase (quinone) family.</text>
</comment>
<organism>
    <name type="scientific">Penicillium crustosum</name>
    <name type="common">Blue mold fungus</name>
    <dbReference type="NCBI Taxonomy" id="36656"/>
    <lineage>
        <taxon>Eukaryota</taxon>
        <taxon>Fungi</taxon>
        <taxon>Dikarya</taxon>
        <taxon>Ascomycota</taxon>
        <taxon>Pezizomycotina</taxon>
        <taxon>Eurotiomycetes</taxon>
        <taxon>Eurotiomycetidae</taxon>
        <taxon>Eurotiales</taxon>
        <taxon>Aspergillaceae</taxon>
        <taxon>Penicillium</taxon>
    </lineage>
</organism>
<keyword id="KW-0274">FAD</keyword>
<keyword id="KW-0285">Flavoprotein</keyword>
<keyword id="KW-0520">NAD</keyword>
<keyword id="KW-0521">NADP</keyword>
<keyword id="KW-0560">Oxidoreductase</keyword>
<accession>A0A481WNM5</accession>
<proteinExistence type="inferred from homology"/>
<feature type="chain" id="PRO_0000455063" description="Ribosyldihydronicotinamide dehydrogenase-like protein traD">
    <location>
        <begin position="1"/>
        <end position="267"/>
    </location>
</feature>
<feature type="binding site" evidence="3">
    <location>
        <position position="9"/>
    </location>
    <ligand>
        <name>FAD</name>
        <dbReference type="ChEBI" id="CHEBI:57692"/>
    </ligand>
</feature>
<feature type="binding site" evidence="3">
    <location>
        <begin position="15"/>
        <end position="16"/>
    </location>
    <ligand>
        <name>FAD</name>
        <dbReference type="ChEBI" id="CHEBI:57692"/>
    </ligand>
</feature>
<feature type="binding site" evidence="3">
    <location>
        <begin position="100"/>
        <end position="103"/>
    </location>
    <ligand>
        <name>FAD</name>
        <dbReference type="ChEBI" id="CHEBI:57692"/>
    </ligand>
</feature>
<feature type="binding site" evidence="3">
    <location>
        <begin position="122"/>
        <end position="124"/>
    </location>
    <ligand>
        <name>substrate</name>
    </ligand>
</feature>
<feature type="binding site" evidence="3">
    <location>
        <begin position="152"/>
        <end position="155"/>
    </location>
    <ligand>
        <name>FAD</name>
        <dbReference type="ChEBI" id="CHEBI:57692"/>
    </ligand>
</feature>
<feature type="binding site" evidence="3">
    <location>
        <position position="160"/>
    </location>
    <ligand>
        <name>FAD</name>
        <dbReference type="ChEBI" id="CHEBI:57692"/>
    </ligand>
</feature>
<name>TRAD_PENCR</name>
<sequence length="267" mass="30692">MKVLIIFAHPEPQSLNGALHRVAVEELEEQGHHVQVSDLYKMKWKSEVDREDFPNFPKDQRLDLWTASAEAYAENSLTQDVLDEQAKLRWADFVIFHFPLWWFTMPAILKGWVDRVYTYGFGHGLGEHSDKRWGDRYGEGTLTGKRAMLIVTLGGWKEHYSARGISGPIEDVLFPINHGILFYPGFEVLPPFVAFRVHKTSFDEMASTLRKRMREIEFTKPIPYRNQNDGEYSIPTLTLHESHGGDLASGFGLHTRTEVETTDVKEA</sequence>
<reference key="1">
    <citation type="journal article" date="2019" name="J. Am. Chem. Soc.">
        <title>Peniphenone and penilactone formation in Penicillium crustosum via 1,4-Michael additions of ortho-quinone methide from hydroxyclavatol to gamma-butyrolactones from Crustosic Acid.</title>
        <authorList>
            <person name="Fan J."/>
            <person name="Liao G."/>
            <person name="Kindinger F."/>
            <person name="Ludwig-Radtke L."/>
            <person name="Yin W.B."/>
            <person name="Li S.M."/>
        </authorList>
    </citation>
    <scope>NUCLEOTIDE SEQUENCE [GENOMIC DNA]</scope>
    <scope>FUNCTION</scope>
    <scope>DISRUPTION PHENOTYPE</scope>
    <scope>PATHWAY</scope>
    <source>
        <strain>PRB-2</strain>
    </source>
</reference>
<reference key="2">
    <citation type="journal article" date="2020" name="J. Org. Chem.">
        <title>Increasing Structural Diversity of Natural Products by Michael Addition with ortho-Quinone Methide as the Acceptor.</title>
        <authorList>
            <person name="Liao G."/>
            <person name="Fan J."/>
            <person name="Ludwig-Radtke L."/>
            <person name="Backhaus K."/>
            <person name="Li S.M."/>
        </authorList>
    </citation>
    <scope>FUNCTION</scope>
</reference>
<dbReference type="EC" id="1.10.-.-" evidence="8"/>
<dbReference type="EMBL" id="MK360919">
    <property type="protein sequence ID" value="QBK15052.1"/>
    <property type="molecule type" value="Genomic_DNA"/>
</dbReference>
<dbReference type="SMR" id="A0A481WNM5"/>
<dbReference type="GO" id="GO:0005829">
    <property type="term" value="C:cytosol"/>
    <property type="evidence" value="ECO:0007669"/>
    <property type="project" value="TreeGrafter"/>
</dbReference>
<dbReference type="GO" id="GO:0003955">
    <property type="term" value="F:NAD(P)H dehydrogenase (quinone) activity"/>
    <property type="evidence" value="ECO:0007669"/>
    <property type="project" value="TreeGrafter"/>
</dbReference>
<dbReference type="Gene3D" id="3.40.50.360">
    <property type="match status" value="1"/>
</dbReference>
<dbReference type="InterPro" id="IPR003680">
    <property type="entry name" value="Flavodoxin_fold"/>
</dbReference>
<dbReference type="InterPro" id="IPR029039">
    <property type="entry name" value="Flavoprotein-like_sf"/>
</dbReference>
<dbReference type="InterPro" id="IPR051545">
    <property type="entry name" value="NAD(P)H_dehydrogenase_qn"/>
</dbReference>
<dbReference type="PANTHER" id="PTHR10204">
    <property type="entry name" value="NAD P H OXIDOREDUCTASE-RELATED"/>
    <property type="match status" value="1"/>
</dbReference>
<dbReference type="PANTHER" id="PTHR10204:SF34">
    <property type="entry name" value="NAD(P)H DEHYDROGENASE [QUINONE] 1 ISOFORM 1"/>
    <property type="match status" value="1"/>
</dbReference>
<dbReference type="Pfam" id="PF02525">
    <property type="entry name" value="Flavodoxin_2"/>
    <property type="match status" value="1"/>
</dbReference>
<dbReference type="SUPFAM" id="SSF52218">
    <property type="entry name" value="Flavoproteins"/>
    <property type="match status" value="1"/>
</dbReference>